<name>Y1322_DEIRA</name>
<protein>
    <recommendedName>
        <fullName>Putative sugar efflux transporter DR_1322</fullName>
    </recommendedName>
</protein>
<sequence>MPHALGLTLAVLLLGLATSLAGPFMSLFAVQQVGMTPLQLGLFLTFNALSAVLVSTRLGRWADRRSDRKPLVLLTLAAGVLAYLALSGVRSVYGVMATGVLLLAVSSAAFPQVFAFARSGFAQAPGDLPEKAVTVLRAVFSFAWVVGPGVGAAVLGRWSFSGVFLLAALCYALAGLPLLFIRPPAPAPAQPNSAPSPLTQELGAPPAPPMGWVVAAFTLYGMAMHMGMVMFSLFVTETLHGTSAQVGFLVGLCALLEIPVMLLFVLSKRLPGVEWLIKAGLLLFVVHFALIYLAQGMPLLIATQVLRAAVLAVMAGLGMTYFQQLMPGRFSAATTLYSNTSVVGSMLSGIVAGAWAQVFGYRPVFLLCAALSLAAWGMMLWATRRPKLA</sequence>
<keyword id="KW-1003">Cell membrane</keyword>
<keyword id="KW-0472">Membrane</keyword>
<keyword id="KW-1185">Reference proteome</keyword>
<keyword id="KW-0762">Sugar transport</keyword>
<keyword id="KW-0812">Transmembrane</keyword>
<keyword id="KW-1133">Transmembrane helix</keyword>
<keyword id="KW-0813">Transport</keyword>
<gene>
    <name type="ordered locus">DR_1322</name>
</gene>
<dbReference type="EMBL" id="AE000513">
    <property type="protein sequence ID" value="AAF10890.1"/>
    <property type="molecule type" value="Genomic_DNA"/>
</dbReference>
<dbReference type="PIR" id="F75411">
    <property type="entry name" value="F75411"/>
</dbReference>
<dbReference type="RefSeq" id="NP_295046.1">
    <property type="nucleotide sequence ID" value="NC_001263.1"/>
</dbReference>
<dbReference type="RefSeq" id="WP_010887964.1">
    <property type="nucleotide sequence ID" value="NC_001263.1"/>
</dbReference>
<dbReference type="SMR" id="Q9RUR0"/>
<dbReference type="STRING" id="243230.DR_1322"/>
<dbReference type="PaxDb" id="243230-DR_1322"/>
<dbReference type="EnsemblBacteria" id="AAF10890">
    <property type="protein sequence ID" value="AAF10890"/>
    <property type="gene ID" value="DR_1322"/>
</dbReference>
<dbReference type="GeneID" id="69517570"/>
<dbReference type="KEGG" id="dra:DR_1322"/>
<dbReference type="PATRIC" id="fig|243230.17.peg.1517"/>
<dbReference type="eggNOG" id="COG2814">
    <property type="taxonomic scope" value="Bacteria"/>
</dbReference>
<dbReference type="HOGENOM" id="CLU_055598_3_0_0"/>
<dbReference type="InParanoid" id="Q9RUR0"/>
<dbReference type="OrthoDB" id="7337792at2"/>
<dbReference type="Proteomes" id="UP000002524">
    <property type="component" value="Chromosome 1"/>
</dbReference>
<dbReference type="GO" id="GO:0005886">
    <property type="term" value="C:plasma membrane"/>
    <property type="evidence" value="ECO:0000318"/>
    <property type="project" value="GO_Central"/>
</dbReference>
<dbReference type="GO" id="GO:0022857">
    <property type="term" value="F:transmembrane transporter activity"/>
    <property type="evidence" value="ECO:0007669"/>
    <property type="project" value="InterPro"/>
</dbReference>
<dbReference type="GO" id="GO:0055085">
    <property type="term" value="P:transmembrane transport"/>
    <property type="evidence" value="ECO:0000318"/>
    <property type="project" value="GO_Central"/>
</dbReference>
<dbReference type="CDD" id="cd17471">
    <property type="entry name" value="MFS_Set"/>
    <property type="match status" value="1"/>
</dbReference>
<dbReference type="Gene3D" id="1.20.1250.20">
    <property type="entry name" value="MFS general substrate transporter like domains"/>
    <property type="match status" value="2"/>
</dbReference>
<dbReference type="InterPro" id="IPR011701">
    <property type="entry name" value="MFS"/>
</dbReference>
<dbReference type="InterPro" id="IPR020846">
    <property type="entry name" value="MFS_dom"/>
</dbReference>
<dbReference type="InterPro" id="IPR036259">
    <property type="entry name" value="MFS_trans_sf"/>
</dbReference>
<dbReference type="PANTHER" id="PTHR23535">
    <property type="entry name" value="SUGAR EFFLUX TRANSPORTER A-RELATED"/>
    <property type="match status" value="1"/>
</dbReference>
<dbReference type="PANTHER" id="PTHR23535:SF2">
    <property type="entry name" value="SUGAR EFFLUX TRANSPORTER A-RELATED"/>
    <property type="match status" value="1"/>
</dbReference>
<dbReference type="Pfam" id="PF07690">
    <property type="entry name" value="MFS_1"/>
    <property type="match status" value="1"/>
</dbReference>
<dbReference type="SUPFAM" id="SSF103473">
    <property type="entry name" value="MFS general substrate transporter"/>
    <property type="match status" value="1"/>
</dbReference>
<dbReference type="PROSITE" id="PS50850">
    <property type="entry name" value="MFS"/>
    <property type="match status" value="1"/>
</dbReference>
<organism>
    <name type="scientific">Deinococcus radiodurans (strain ATCC 13939 / DSM 20539 / JCM 16871 / CCUG 27074 / LMG 4051 / NBRC 15346 / NCIMB 9279 / VKM B-1422 / R1)</name>
    <dbReference type="NCBI Taxonomy" id="243230"/>
    <lineage>
        <taxon>Bacteria</taxon>
        <taxon>Thermotogati</taxon>
        <taxon>Deinococcota</taxon>
        <taxon>Deinococci</taxon>
        <taxon>Deinococcales</taxon>
        <taxon>Deinococcaceae</taxon>
        <taxon>Deinococcus</taxon>
    </lineage>
</organism>
<reference key="1">
    <citation type="journal article" date="1999" name="Science">
        <title>Genome sequence of the radioresistant bacterium Deinococcus radiodurans R1.</title>
        <authorList>
            <person name="White O."/>
            <person name="Eisen J.A."/>
            <person name="Heidelberg J.F."/>
            <person name="Hickey E.K."/>
            <person name="Peterson J.D."/>
            <person name="Dodson R.J."/>
            <person name="Haft D.H."/>
            <person name="Gwinn M.L."/>
            <person name="Nelson W.C."/>
            <person name="Richardson D.L."/>
            <person name="Moffat K.S."/>
            <person name="Qin H."/>
            <person name="Jiang L."/>
            <person name="Pamphile W."/>
            <person name="Crosby M."/>
            <person name="Shen M."/>
            <person name="Vamathevan J.J."/>
            <person name="Lam P."/>
            <person name="McDonald L.A."/>
            <person name="Utterback T.R."/>
            <person name="Zalewski C."/>
            <person name="Makarova K.S."/>
            <person name="Aravind L."/>
            <person name="Daly M.J."/>
            <person name="Minton K.W."/>
            <person name="Fleischmann R.D."/>
            <person name="Ketchum K.A."/>
            <person name="Nelson K.E."/>
            <person name="Salzberg S.L."/>
            <person name="Smith H.O."/>
            <person name="Venter J.C."/>
            <person name="Fraser C.M."/>
        </authorList>
    </citation>
    <scope>NUCLEOTIDE SEQUENCE [LARGE SCALE GENOMIC DNA]</scope>
    <source>
        <strain>ATCC 13939 / DSM 20539 / JCM 16871 / CCUG 27074 / LMG 4051 / NBRC 15346 / NCIMB 9279 / VKM B-1422 / R1</strain>
    </source>
</reference>
<comment type="function">
    <text evidence="1">Involved in the efflux of sugars. The physiological role may be the detoxification of non-metabolizable sugar analogs (By similarity).</text>
</comment>
<comment type="subcellular location">
    <subcellularLocation>
        <location evidence="3">Cell membrane</location>
        <topology evidence="3">Multi-pass membrane protein</topology>
    </subcellularLocation>
</comment>
<comment type="similarity">
    <text evidence="3">Belongs to the major facilitator superfamily. Set transporter family.</text>
</comment>
<proteinExistence type="inferred from homology"/>
<evidence type="ECO:0000250" key="1"/>
<evidence type="ECO:0000255" key="2"/>
<evidence type="ECO:0000305" key="3"/>
<accession>Q9RUR0</accession>
<feature type="chain" id="PRO_0000209364" description="Putative sugar efflux transporter DR_1322">
    <location>
        <begin position="1"/>
        <end position="389"/>
    </location>
</feature>
<feature type="transmembrane region" description="Helical" evidence="2">
    <location>
        <begin position="10"/>
        <end position="30"/>
    </location>
</feature>
<feature type="transmembrane region" description="Helical" evidence="2">
    <location>
        <begin position="34"/>
        <end position="54"/>
    </location>
</feature>
<feature type="transmembrane region" description="Helical" evidence="2">
    <location>
        <begin position="69"/>
        <end position="89"/>
    </location>
</feature>
<feature type="transmembrane region" description="Helical" evidence="2">
    <location>
        <begin position="96"/>
        <end position="116"/>
    </location>
</feature>
<feature type="transmembrane region" description="Helical" evidence="2">
    <location>
        <begin position="135"/>
        <end position="155"/>
    </location>
</feature>
<feature type="transmembrane region" description="Helical" evidence="2">
    <location>
        <begin position="161"/>
        <end position="181"/>
    </location>
</feature>
<feature type="transmembrane region" description="Helical" evidence="2">
    <location>
        <begin position="211"/>
        <end position="231"/>
    </location>
</feature>
<feature type="transmembrane region" description="Helical" evidence="2">
    <location>
        <begin position="246"/>
        <end position="266"/>
    </location>
</feature>
<feature type="transmembrane region" description="Helical" evidence="2">
    <location>
        <begin position="281"/>
        <end position="301"/>
    </location>
</feature>
<feature type="transmembrane region" description="Helical" evidence="2">
    <location>
        <begin position="308"/>
        <end position="328"/>
    </location>
</feature>
<feature type="transmembrane region" description="Helical" evidence="2">
    <location>
        <begin position="341"/>
        <end position="361"/>
    </location>
</feature>
<feature type="transmembrane region" description="Helical" evidence="2">
    <location>
        <begin position="363"/>
        <end position="383"/>
    </location>
</feature>